<dbReference type="EMBL" id="CP000703">
    <property type="protein sequence ID" value="ABQ49048.1"/>
    <property type="molecule type" value="Genomic_DNA"/>
</dbReference>
<dbReference type="RefSeq" id="WP_000018608.1">
    <property type="nucleotide sequence ID" value="NC_009487.1"/>
</dbReference>
<dbReference type="SMR" id="A5IS75"/>
<dbReference type="KEGG" id="saj:SaurJH9_1248"/>
<dbReference type="HOGENOM" id="CLU_078499_4_1_9"/>
<dbReference type="GO" id="GO:0005737">
    <property type="term" value="C:cytoplasm"/>
    <property type="evidence" value="ECO:0007669"/>
    <property type="project" value="UniProtKB-SubCell"/>
</dbReference>
<dbReference type="GO" id="GO:0000917">
    <property type="term" value="P:division septum assembly"/>
    <property type="evidence" value="ECO:0007669"/>
    <property type="project" value="UniProtKB-KW"/>
</dbReference>
<dbReference type="GO" id="GO:0043093">
    <property type="term" value="P:FtsZ-dependent cytokinesis"/>
    <property type="evidence" value="ECO:0007669"/>
    <property type="project" value="UniProtKB-UniRule"/>
</dbReference>
<dbReference type="Gene3D" id="3.30.110.150">
    <property type="entry name" value="SepF-like protein"/>
    <property type="match status" value="1"/>
</dbReference>
<dbReference type="HAMAP" id="MF_01197">
    <property type="entry name" value="SepF"/>
    <property type="match status" value="1"/>
</dbReference>
<dbReference type="InterPro" id="IPR023052">
    <property type="entry name" value="Cell_div_SepF"/>
</dbReference>
<dbReference type="InterPro" id="IPR007561">
    <property type="entry name" value="Cell_div_SepF/SepF-rel"/>
</dbReference>
<dbReference type="InterPro" id="IPR038594">
    <property type="entry name" value="SepF-like_sf"/>
</dbReference>
<dbReference type="PANTHER" id="PTHR35798">
    <property type="entry name" value="CELL DIVISION PROTEIN SEPF"/>
    <property type="match status" value="1"/>
</dbReference>
<dbReference type="PANTHER" id="PTHR35798:SF1">
    <property type="entry name" value="CELL DIVISION PROTEIN SEPF"/>
    <property type="match status" value="1"/>
</dbReference>
<dbReference type="Pfam" id="PF04472">
    <property type="entry name" value="SepF"/>
    <property type="match status" value="1"/>
</dbReference>
<accession>A5IS75</accession>
<sequence>MSHLALKDLFSGFFVIDDEEEVEVPDKQQQVNEAPAKEQSQQTTKQNAIKSVPQKSASRYTTTSEERNNRMSNYSKNNSRNVVTMNNATPNNASQESSKMCLFEPRVFSDTQDIADELKNRRATLVNLQRIDKVSAKRIIDFLSGTVYAIGGDIQRVGTDIFLCTPDNVEVAGSITDHIENMEHSFD</sequence>
<evidence type="ECO:0000255" key="1">
    <source>
        <dbReference type="HAMAP-Rule" id="MF_01197"/>
    </source>
</evidence>
<evidence type="ECO:0000256" key="2">
    <source>
        <dbReference type="SAM" id="MobiDB-lite"/>
    </source>
</evidence>
<comment type="function">
    <text evidence="1">Cell division protein that is part of the divisome complex and is recruited early to the Z-ring. Probably stimulates Z-ring formation, perhaps through the cross-linking of FtsZ protofilaments. Its function overlaps with FtsA.</text>
</comment>
<comment type="subunit">
    <text evidence="1">Homodimer. Interacts with FtsZ.</text>
</comment>
<comment type="subcellular location">
    <subcellularLocation>
        <location evidence="1">Cytoplasm</location>
    </subcellularLocation>
    <text evidence="1">Localizes to the division site, in a FtsZ-dependent manner.</text>
</comment>
<comment type="similarity">
    <text evidence="1">Belongs to the SepF family.</text>
</comment>
<protein>
    <recommendedName>
        <fullName evidence="1">Cell division protein SepF</fullName>
    </recommendedName>
</protein>
<keyword id="KW-0131">Cell cycle</keyword>
<keyword id="KW-0132">Cell division</keyword>
<keyword id="KW-0963">Cytoplasm</keyword>
<keyword id="KW-0717">Septation</keyword>
<proteinExistence type="inferred from homology"/>
<reference key="1">
    <citation type="submission" date="2007-05" db="EMBL/GenBank/DDBJ databases">
        <title>Complete sequence of chromosome of Staphylococcus aureus subsp. aureus JH9.</title>
        <authorList>
            <consortium name="US DOE Joint Genome Institute"/>
            <person name="Copeland A."/>
            <person name="Lucas S."/>
            <person name="Lapidus A."/>
            <person name="Barry K."/>
            <person name="Detter J.C."/>
            <person name="Glavina del Rio T."/>
            <person name="Hammon N."/>
            <person name="Israni S."/>
            <person name="Pitluck S."/>
            <person name="Chain P."/>
            <person name="Malfatti S."/>
            <person name="Shin M."/>
            <person name="Vergez L."/>
            <person name="Schmutz J."/>
            <person name="Larimer F."/>
            <person name="Land M."/>
            <person name="Hauser L."/>
            <person name="Kyrpides N."/>
            <person name="Kim E."/>
            <person name="Tomasz A."/>
            <person name="Richardson P."/>
        </authorList>
    </citation>
    <scope>NUCLEOTIDE SEQUENCE [LARGE SCALE GENOMIC DNA]</scope>
    <source>
        <strain>JH9</strain>
    </source>
</reference>
<feature type="chain" id="PRO_0000334077" description="Cell division protein SepF">
    <location>
        <begin position="1"/>
        <end position="187"/>
    </location>
</feature>
<feature type="region of interest" description="Disordered" evidence="2">
    <location>
        <begin position="21"/>
        <end position="97"/>
    </location>
</feature>
<feature type="compositionally biased region" description="Polar residues" evidence="2">
    <location>
        <begin position="38"/>
        <end position="63"/>
    </location>
</feature>
<feature type="compositionally biased region" description="Polar residues" evidence="2">
    <location>
        <begin position="70"/>
        <end position="97"/>
    </location>
</feature>
<name>SEPF_STAA9</name>
<organism>
    <name type="scientific">Staphylococcus aureus (strain JH9)</name>
    <dbReference type="NCBI Taxonomy" id="359786"/>
    <lineage>
        <taxon>Bacteria</taxon>
        <taxon>Bacillati</taxon>
        <taxon>Bacillota</taxon>
        <taxon>Bacilli</taxon>
        <taxon>Bacillales</taxon>
        <taxon>Staphylococcaceae</taxon>
        <taxon>Staphylococcus</taxon>
    </lineage>
</organism>
<gene>
    <name evidence="1" type="primary">sepF</name>
    <name type="ordered locus">SaurJH9_1248</name>
</gene>